<dbReference type="EMBL" id="CP000010">
    <property type="protein sequence ID" value="AAU49383.1"/>
    <property type="molecule type" value="Genomic_DNA"/>
</dbReference>
<dbReference type="RefSeq" id="WP_004197638.1">
    <property type="nucleotide sequence ID" value="NC_006348.1"/>
</dbReference>
<dbReference type="RefSeq" id="YP_102329.1">
    <property type="nucleotide sequence ID" value="NC_006348.1"/>
</dbReference>
<dbReference type="SMR" id="Q62LT9"/>
<dbReference type="GeneID" id="98102461"/>
<dbReference type="KEGG" id="bma:BMA0533"/>
<dbReference type="PATRIC" id="fig|243160.12.peg.547"/>
<dbReference type="eggNOG" id="COG0236">
    <property type="taxonomic scope" value="Bacteria"/>
</dbReference>
<dbReference type="HOGENOM" id="CLU_108696_5_1_4"/>
<dbReference type="UniPathway" id="UPA00094"/>
<dbReference type="PRO" id="PR:Q62LT9"/>
<dbReference type="Proteomes" id="UP000006693">
    <property type="component" value="Chromosome 1"/>
</dbReference>
<dbReference type="GO" id="GO:0005829">
    <property type="term" value="C:cytosol"/>
    <property type="evidence" value="ECO:0007669"/>
    <property type="project" value="TreeGrafter"/>
</dbReference>
<dbReference type="GO" id="GO:0016020">
    <property type="term" value="C:membrane"/>
    <property type="evidence" value="ECO:0007669"/>
    <property type="project" value="GOC"/>
</dbReference>
<dbReference type="GO" id="GO:0000035">
    <property type="term" value="F:acyl binding"/>
    <property type="evidence" value="ECO:0007669"/>
    <property type="project" value="TreeGrafter"/>
</dbReference>
<dbReference type="GO" id="GO:0000036">
    <property type="term" value="F:acyl carrier activity"/>
    <property type="evidence" value="ECO:0007669"/>
    <property type="project" value="UniProtKB-UniRule"/>
</dbReference>
<dbReference type="GO" id="GO:0009245">
    <property type="term" value="P:lipid A biosynthetic process"/>
    <property type="evidence" value="ECO:0007669"/>
    <property type="project" value="TreeGrafter"/>
</dbReference>
<dbReference type="FunFam" id="1.10.1200.10:FF:000001">
    <property type="entry name" value="Acyl carrier protein"/>
    <property type="match status" value="1"/>
</dbReference>
<dbReference type="Gene3D" id="1.10.1200.10">
    <property type="entry name" value="ACP-like"/>
    <property type="match status" value="1"/>
</dbReference>
<dbReference type="HAMAP" id="MF_01217">
    <property type="entry name" value="Acyl_carrier"/>
    <property type="match status" value="1"/>
</dbReference>
<dbReference type="InterPro" id="IPR003231">
    <property type="entry name" value="ACP"/>
</dbReference>
<dbReference type="InterPro" id="IPR036736">
    <property type="entry name" value="ACP-like_sf"/>
</dbReference>
<dbReference type="InterPro" id="IPR009081">
    <property type="entry name" value="PP-bd_ACP"/>
</dbReference>
<dbReference type="InterPro" id="IPR006162">
    <property type="entry name" value="Ppantetheine_attach_site"/>
</dbReference>
<dbReference type="NCBIfam" id="TIGR00517">
    <property type="entry name" value="acyl_carrier"/>
    <property type="match status" value="1"/>
</dbReference>
<dbReference type="NCBIfam" id="NF002148">
    <property type="entry name" value="PRK00982.1-2"/>
    <property type="match status" value="1"/>
</dbReference>
<dbReference type="NCBIfam" id="NF002149">
    <property type="entry name" value="PRK00982.1-3"/>
    <property type="match status" value="1"/>
</dbReference>
<dbReference type="NCBIfam" id="NF002150">
    <property type="entry name" value="PRK00982.1-4"/>
    <property type="match status" value="1"/>
</dbReference>
<dbReference type="NCBIfam" id="NF002151">
    <property type="entry name" value="PRK00982.1-5"/>
    <property type="match status" value="1"/>
</dbReference>
<dbReference type="PANTHER" id="PTHR20863">
    <property type="entry name" value="ACYL CARRIER PROTEIN"/>
    <property type="match status" value="1"/>
</dbReference>
<dbReference type="PANTHER" id="PTHR20863:SF76">
    <property type="entry name" value="CARRIER DOMAIN-CONTAINING PROTEIN"/>
    <property type="match status" value="1"/>
</dbReference>
<dbReference type="Pfam" id="PF00550">
    <property type="entry name" value="PP-binding"/>
    <property type="match status" value="1"/>
</dbReference>
<dbReference type="SUPFAM" id="SSF47336">
    <property type="entry name" value="ACP-like"/>
    <property type="match status" value="1"/>
</dbReference>
<dbReference type="PROSITE" id="PS50075">
    <property type="entry name" value="CARRIER"/>
    <property type="match status" value="1"/>
</dbReference>
<dbReference type="PROSITE" id="PS00012">
    <property type="entry name" value="PHOSPHOPANTETHEINE"/>
    <property type="match status" value="1"/>
</dbReference>
<sequence>MDNIEQRVKKIVAEQLGVAEAEIKNEASFVNDLGADSLDTVELVMALEDEFGMEIPDEEAEKITTVQQAIDYARANVKA</sequence>
<keyword id="KW-0963">Cytoplasm</keyword>
<keyword id="KW-0275">Fatty acid biosynthesis</keyword>
<keyword id="KW-0276">Fatty acid metabolism</keyword>
<keyword id="KW-0444">Lipid biosynthesis</keyword>
<keyword id="KW-0443">Lipid metabolism</keyword>
<keyword id="KW-0596">Phosphopantetheine</keyword>
<keyword id="KW-0597">Phosphoprotein</keyword>
<keyword id="KW-1185">Reference proteome</keyword>
<organism>
    <name type="scientific">Burkholderia mallei (strain ATCC 23344)</name>
    <dbReference type="NCBI Taxonomy" id="243160"/>
    <lineage>
        <taxon>Bacteria</taxon>
        <taxon>Pseudomonadati</taxon>
        <taxon>Pseudomonadota</taxon>
        <taxon>Betaproteobacteria</taxon>
        <taxon>Burkholderiales</taxon>
        <taxon>Burkholderiaceae</taxon>
        <taxon>Burkholderia</taxon>
        <taxon>pseudomallei group</taxon>
    </lineage>
</organism>
<name>ACP_BURMA</name>
<feature type="chain" id="PRO_0000180120" description="Acyl carrier protein">
    <location>
        <begin position="1"/>
        <end position="79"/>
    </location>
</feature>
<feature type="domain" description="Carrier" evidence="2">
    <location>
        <begin position="2"/>
        <end position="77"/>
    </location>
</feature>
<feature type="modified residue" description="O-(pantetheine 4'-phosphoryl)serine" evidence="2">
    <location>
        <position position="37"/>
    </location>
</feature>
<accession>Q62LT9</accession>
<evidence type="ECO:0000255" key="1">
    <source>
        <dbReference type="HAMAP-Rule" id="MF_01217"/>
    </source>
</evidence>
<evidence type="ECO:0000255" key="2">
    <source>
        <dbReference type="PROSITE-ProRule" id="PRU00258"/>
    </source>
</evidence>
<comment type="function">
    <text evidence="1">Carrier of the growing fatty acid chain in fatty acid biosynthesis.</text>
</comment>
<comment type="pathway">
    <text evidence="1">Lipid metabolism; fatty acid biosynthesis.</text>
</comment>
<comment type="subcellular location">
    <subcellularLocation>
        <location evidence="1">Cytoplasm</location>
    </subcellularLocation>
</comment>
<comment type="PTM">
    <text evidence="1">4'-phosphopantetheine is transferred from CoA to a specific serine of apo-ACP by AcpS. This modification is essential for activity because fatty acids are bound in thioester linkage to the sulfhydryl of the prosthetic group.</text>
</comment>
<comment type="similarity">
    <text evidence="1">Belongs to the acyl carrier protein (ACP) family.</text>
</comment>
<protein>
    <recommendedName>
        <fullName evidence="1">Acyl carrier protein</fullName>
        <shortName evidence="1">ACP</shortName>
    </recommendedName>
</protein>
<reference key="1">
    <citation type="journal article" date="2004" name="Proc. Natl. Acad. Sci. U.S.A.">
        <title>Structural flexibility in the Burkholderia mallei genome.</title>
        <authorList>
            <person name="Nierman W.C."/>
            <person name="DeShazer D."/>
            <person name="Kim H.S."/>
            <person name="Tettelin H."/>
            <person name="Nelson K.E."/>
            <person name="Feldblyum T.V."/>
            <person name="Ulrich R.L."/>
            <person name="Ronning C.M."/>
            <person name="Brinkac L.M."/>
            <person name="Daugherty S.C."/>
            <person name="Davidsen T.D."/>
            <person name="DeBoy R.T."/>
            <person name="Dimitrov G."/>
            <person name="Dodson R.J."/>
            <person name="Durkin A.S."/>
            <person name="Gwinn M.L."/>
            <person name="Haft D.H."/>
            <person name="Khouri H.M."/>
            <person name="Kolonay J.F."/>
            <person name="Madupu R."/>
            <person name="Mohammoud Y."/>
            <person name="Nelson W.C."/>
            <person name="Radune D."/>
            <person name="Romero C.M."/>
            <person name="Sarria S."/>
            <person name="Selengut J."/>
            <person name="Shamblin C."/>
            <person name="Sullivan S.A."/>
            <person name="White O."/>
            <person name="Yu Y."/>
            <person name="Zafar N."/>
            <person name="Zhou L."/>
            <person name="Fraser C.M."/>
        </authorList>
    </citation>
    <scope>NUCLEOTIDE SEQUENCE [LARGE SCALE GENOMIC DNA]</scope>
    <source>
        <strain>ATCC 23344</strain>
    </source>
</reference>
<proteinExistence type="inferred from homology"/>
<gene>
    <name evidence="1" type="primary">acpP</name>
    <name type="ordered locus">BMA0533</name>
</gene>